<reference key="1">
    <citation type="journal article" date="2004" name="Genome Res.">
        <title>The status, quality, and expansion of the NIH full-length cDNA project: the Mammalian Gene Collection (MGC).</title>
        <authorList>
            <consortium name="The MGC Project Team"/>
        </authorList>
    </citation>
    <scope>NUCLEOTIDE SEQUENCE [LARGE SCALE MRNA]</scope>
    <source>
        <tissue>Prostate</tissue>
    </source>
</reference>
<reference key="2">
    <citation type="journal article" date="2012" name="Nat. Commun.">
        <title>Quantitative maps of protein phosphorylation sites across 14 different rat organs and tissues.</title>
        <authorList>
            <person name="Lundby A."/>
            <person name="Secher A."/>
            <person name="Lage K."/>
            <person name="Nordsborg N.B."/>
            <person name="Dmytriyev A."/>
            <person name="Lundby C."/>
            <person name="Olsen J.V."/>
        </authorList>
    </citation>
    <scope>PHOSPHORYLATION [LARGE SCALE ANALYSIS] AT SER-681; SER-685 AND SER-687</scope>
    <scope>IDENTIFICATION BY MASS SPECTROMETRY [LARGE SCALE ANALYSIS]</scope>
</reference>
<keyword id="KW-0156">Chromatin regulator</keyword>
<keyword id="KW-1017">Isopeptide bond</keyword>
<keyword id="KW-0479">Metal-binding</keyword>
<keyword id="KW-0539">Nucleus</keyword>
<keyword id="KW-0597">Phosphoprotein</keyword>
<keyword id="KW-1185">Reference proteome</keyword>
<keyword id="KW-0677">Repeat</keyword>
<keyword id="KW-0804">Transcription</keyword>
<keyword id="KW-0805">Transcription regulation</keyword>
<keyword id="KW-0832">Ubl conjugation</keyword>
<keyword id="KW-0862">Zinc</keyword>
<keyword id="KW-0863">Zinc-finger</keyword>
<feature type="chain" id="PRO_0000346785" description="Lethal(3)malignant brain tumor-like protein 2">
    <location>
        <begin position="1"/>
        <end position="703"/>
    </location>
</feature>
<feature type="repeat" description="MBT 1">
    <location>
        <begin position="179"/>
        <end position="283"/>
    </location>
</feature>
<feature type="repeat" description="MBT 2">
    <location>
        <begin position="291"/>
        <end position="391"/>
    </location>
</feature>
<feature type="repeat" description="MBT 3">
    <location>
        <begin position="397"/>
        <end position="500"/>
    </location>
</feature>
<feature type="repeat" description="MBT 4">
    <location>
        <begin position="508"/>
        <end position="604"/>
    </location>
</feature>
<feature type="zinc finger region" description="FCS-type" evidence="3">
    <location>
        <begin position="81"/>
        <end position="116"/>
    </location>
</feature>
<feature type="region of interest" description="Disordered" evidence="4">
    <location>
        <begin position="1"/>
        <end position="70"/>
    </location>
</feature>
<feature type="region of interest" description="Disordered" evidence="4">
    <location>
        <begin position="604"/>
        <end position="649"/>
    </location>
</feature>
<feature type="region of interest" description="Disordered" evidence="4">
    <location>
        <begin position="672"/>
        <end position="703"/>
    </location>
</feature>
<feature type="compositionally biased region" description="Acidic residues" evidence="4">
    <location>
        <begin position="15"/>
        <end position="25"/>
    </location>
</feature>
<feature type="compositionally biased region" description="Low complexity" evidence="4">
    <location>
        <begin position="35"/>
        <end position="49"/>
    </location>
</feature>
<feature type="compositionally biased region" description="Acidic residues" evidence="4">
    <location>
        <begin position="50"/>
        <end position="60"/>
    </location>
</feature>
<feature type="compositionally biased region" description="Basic residues" evidence="4">
    <location>
        <begin position="619"/>
        <end position="634"/>
    </location>
</feature>
<feature type="binding site" evidence="3">
    <location>
        <position position="90"/>
    </location>
    <ligand>
        <name>Zn(2+)</name>
        <dbReference type="ChEBI" id="CHEBI:29105"/>
    </ligand>
</feature>
<feature type="binding site" evidence="3">
    <location>
        <position position="93"/>
    </location>
    <ligand>
        <name>Zn(2+)</name>
        <dbReference type="ChEBI" id="CHEBI:29105"/>
    </ligand>
</feature>
<feature type="binding site" evidence="3">
    <location>
        <position position="110"/>
    </location>
    <ligand>
        <name>Zn(2+)</name>
        <dbReference type="ChEBI" id="CHEBI:29105"/>
    </ligand>
</feature>
<feature type="binding site" evidence="3">
    <location>
        <position position="114"/>
    </location>
    <ligand>
        <name>Zn(2+)</name>
        <dbReference type="ChEBI" id="CHEBI:29105"/>
    </ligand>
</feature>
<feature type="modified residue" description="Phosphoserine" evidence="2">
    <location>
        <position position="13"/>
    </location>
</feature>
<feature type="modified residue" description="Phosphoserine" evidence="2">
    <location>
        <position position="67"/>
    </location>
</feature>
<feature type="modified residue" description="Phosphoserine" evidence="2">
    <location>
        <position position="338"/>
    </location>
</feature>
<feature type="modified residue" description="Phosphoserine" evidence="6">
    <location>
        <position position="681"/>
    </location>
</feature>
<feature type="modified residue" description="Phosphoserine" evidence="6">
    <location>
        <position position="685"/>
    </location>
</feature>
<feature type="modified residue" description="Phosphoserine" evidence="6">
    <location>
        <position position="687"/>
    </location>
</feature>
<feature type="cross-link" description="Glycyl lysine isopeptide (Lys-Gly) (interchain with G-Cter in SUMO2)" evidence="2">
    <location>
        <position position="405"/>
    </location>
</feature>
<feature type="cross-link" description="Glycyl lysine isopeptide (Lys-Gly) (interchain with G-Cter in SUMO2)" evidence="2">
    <location>
        <position position="647"/>
    </location>
</feature>
<feature type="cross-link" description="Glycyl lysine isopeptide (Lys-Gly) (interchain with G-Cter in SUMO2)" evidence="2">
    <location>
        <position position="673"/>
    </location>
</feature>
<feature type="cross-link" description="Glycyl lysine isopeptide (Lys-Gly) (interchain with G-Cter in SUMO1); alternate" evidence="2">
    <location>
        <position position="698"/>
    </location>
</feature>
<feature type="cross-link" description="Glycyl lysine isopeptide (Lys-Gly) (interchain with G-Cter in SUMO2); alternate" evidence="2">
    <location>
        <position position="698"/>
    </location>
</feature>
<organism>
    <name type="scientific">Rattus norvegicus</name>
    <name type="common">Rat</name>
    <dbReference type="NCBI Taxonomy" id="10116"/>
    <lineage>
        <taxon>Eukaryota</taxon>
        <taxon>Metazoa</taxon>
        <taxon>Chordata</taxon>
        <taxon>Craniata</taxon>
        <taxon>Vertebrata</taxon>
        <taxon>Euteleostomi</taxon>
        <taxon>Mammalia</taxon>
        <taxon>Eutheria</taxon>
        <taxon>Euarchontoglires</taxon>
        <taxon>Glires</taxon>
        <taxon>Rodentia</taxon>
        <taxon>Myomorpha</taxon>
        <taxon>Muroidea</taxon>
        <taxon>Muridae</taxon>
        <taxon>Murinae</taxon>
        <taxon>Rattus</taxon>
    </lineage>
</organism>
<name>LMBL2_RAT</name>
<gene>
    <name type="primary">L3mbtl2</name>
</gene>
<dbReference type="EMBL" id="BC101865">
    <property type="protein sequence ID" value="AAI01866.1"/>
    <property type="molecule type" value="mRNA"/>
</dbReference>
<dbReference type="RefSeq" id="NP_001028867.1">
    <property type="nucleotide sequence ID" value="NM_001033695.2"/>
</dbReference>
<dbReference type="SMR" id="Q3MIF2"/>
<dbReference type="FunCoup" id="Q3MIF2">
    <property type="interactions" value="3491"/>
</dbReference>
<dbReference type="STRING" id="10116.ENSRNOP00000031908"/>
<dbReference type="iPTMnet" id="Q3MIF2"/>
<dbReference type="PhosphoSitePlus" id="Q3MIF2"/>
<dbReference type="PaxDb" id="10116-ENSRNOP00000031908"/>
<dbReference type="Ensembl" id="ENSRNOT00000034998.7">
    <property type="protein sequence ID" value="ENSRNOP00000031908.5"/>
    <property type="gene ID" value="ENSRNOG00000024743.7"/>
</dbReference>
<dbReference type="GeneID" id="300320"/>
<dbReference type="KEGG" id="rno:300320"/>
<dbReference type="UCSC" id="RGD:1308569">
    <property type="organism name" value="rat"/>
</dbReference>
<dbReference type="AGR" id="RGD:1308569"/>
<dbReference type="CTD" id="83746"/>
<dbReference type="RGD" id="1308569">
    <property type="gene designation" value="L3mbtl2"/>
</dbReference>
<dbReference type="eggNOG" id="KOG3766">
    <property type="taxonomic scope" value="Eukaryota"/>
</dbReference>
<dbReference type="GeneTree" id="ENSGT00940000153840"/>
<dbReference type="HOGENOM" id="CLU_005352_2_1_1"/>
<dbReference type="InParanoid" id="Q3MIF2"/>
<dbReference type="OMA" id="QVNYPGP"/>
<dbReference type="OrthoDB" id="5800688at2759"/>
<dbReference type="PhylomeDB" id="Q3MIF2"/>
<dbReference type="Reactome" id="R-RNO-4551638">
    <property type="pathway name" value="SUMOylation of chromatin organization proteins"/>
</dbReference>
<dbReference type="Reactome" id="R-RNO-8953750">
    <property type="pathway name" value="Transcriptional Regulation by E2F6"/>
</dbReference>
<dbReference type="PRO" id="PR:Q3MIF2"/>
<dbReference type="Proteomes" id="UP000002494">
    <property type="component" value="Chromosome 7"/>
</dbReference>
<dbReference type="Bgee" id="ENSRNOG00000024743">
    <property type="expression patterns" value="Expressed in thymus and 20 other cell types or tissues"/>
</dbReference>
<dbReference type="GO" id="GO:0005634">
    <property type="term" value="C:nucleus"/>
    <property type="evidence" value="ECO:0000266"/>
    <property type="project" value="RGD"/>
</dbReference>
<dbReference type="GO" id="GO:0003682">
    <property type="term" value="F:chromatin binding"/>
    <property type="evidence" value="ECO:0000318"/>
    <property type="project" value="GO_Central"/>
</dbReference>
<dbReference type="GO" id="GO:0042393">
    <property type="term" value="F:histone binding"/>
    <property type="evidence" value="ECO:0000266"/>
    <property type="project" value="RGD"/>
</dbReference>
<dbReference type="GO" id="GO:0140005">
    <property type="term" value="F:histone H4K20me2 reader activity"/>
    <property type="evidence" value="ECO:0000250"/>
    <property type="project" value="UniProtKB"/>
</dbReference>
<dbReference type="GO" id="GO:0035064">
    <property type="term" value="F:methylated histone binding"/>
    <property type="evidence" value="ECO:0000266"/>
    <property type="project" value="RGD"/>
</dbReference>
<dbReference type="GO" id="GO:1990841">
    <property type="term" value="F:promoter-specific chromatin binding"/>
    <property type="evidence" value="ECO:0000266"/>
    <property type="project" value="RGD"/>
</dbReference>
<dbReference type="GO" id="GO:0008270">
    <property type="term" value="F:zinc ion binding"/>
    <property type="evidence" value="ECO:0007669"/>
    <property type="project" value="UniProtKB-KW"/>
</dbReference>
<dbReference type="GO" id="GO:0006325">
    <property type="term" value="P:chromatin organization"/>
    <property type="evidence" value="ECO:0000266"/>
    <property type="project" value="RGD"/>
</dbReference>
<dbReference type="GO" id="GO:0007398">
    <property type="term" value="P:ectoderm development"/>
    <property type="evidence" value="ECO:0000266"/>
    <property type="project" value="RGD"/>
</dbReference>
<dbReference type="GO" id="GO:0045892">
    <property type="term" value="P:negative regulation of DNA-templated transcription"/>
    <property type="evidence" value="ECO:0000318"/>
    <property type="project" value="GO_Central"/>
</dbReference>
<dbReference type="GO" id="GO:0010629">
    <property type="term" value="P:negative regulation of gene expression"/>
    <property type="evidence" value="ECO:0000266"/>
    <property type="project" value="RGD"/>
</dbReference>
<dbReference type="GO" id="GO:0048863">
    <property type="term" value="P:stem cell differentiation"/>
    <property type="evidence" value="ECO:0000266"/>
    <property type="project" value="RGD"/>
</dbReference>
<dbReference type="GO" id="GO:0072089">
    <property type="term" value="P:stem cell proliferation"/>
    <property type="evidence" value="ECO:0000266"/>
    <property type="project" value="RGD"/>
</dbReference>
<dbReference type="CDD" id="cd20100">
    <property type="entry name" value="MBT_dSfmbt-like_rpt4"/>
    <property type="match status" value="1"/>
</dbReference>
<dbReference type="CDD" id="cd20121">
    <property type="entry name" value="MBT_L3MBTL2_rpt1"/>
    <property type="match status" value="1"/>
</dbReference>
<dbReference type="CDD" id="cd20124">
    <property type="entry name" value="MBT_L3MBTL2_rpt2"/>
    <property type="match status" value="1"/>
</dbReference>
<dbReference type="CDD" id="cd20127">
    <property type="entry name" value="MBT_L3MBTL2_rpt3"/>
    <property type="match status" value="1"/>
</dbReference>
<dbReference type="FunFam" id="2.30.30.140:FF:000010">
    <property type="entry name" value="MBT domain-containing protein 1 isoform X1"/>
    <property type="match status" value="1"/>
</dbReference>
<dbReference type="FunFam" id="2.30.30.140:FF:000015">
    <property type="entry name" value="MBT domain-containing protein 1 isoform X1"/>
    <property type="match status" value="1"/>
</dbReference>
<dbReference type="FunFam" id="2.30.30.140:FF:000019">
    <property type="entry name" value="MBT domain-containing protein 1 isoform X1"/>
    <property type="match status" value="1"/>
</dbReference>
<dbReference type="FunFam" id="2.30.30.140:FF:000032">
    <property type="entry name" value="MBT domain-containing protein 1 isoform X1"/>
    <property type="match status" value="1"/>
</dbReference>
<dbReference type="FunFam" id="3.30.60.160:FF:000001">
    <property type="entry name" value="MBT domain-containing protein 1 isoform X1"/>
    <property type="match status" value="1"/>
</dbReference>
<dbReference type="Gene3D" id="2.30.30.140">
    <property type="match status" value="4"/>
</dbReference>
<dbReference type="Gene3D" id="3.30.60.160">
    <property type="match status" value="1"/>
</dbReference>
<dbReference type="InterPro" id="IPR004092">
    <property type="entry name" value="Mbt"/>
</dbReference>
<dbReference type="InterPro" id="IPR047356">
    <property type="entry name" value="MBT_L3MBTL2_rpt1"/>
</dbReference>
<dbReference type="InterPro" id="IPR047357">
    <property type="entry name" value="MBT_L3MBTL2_rpt2"/>
</dbReference>
<dbReference type="InterPro" id="IPR050548">
    <property type="entry name" value="PcG_chromatin_remod_factors"/>
</dbReference>
<dbReference type="InterPro" id="IPR012313">
    <property type="entry name" value="Znf_FCS"/>
</dbReference>
<dbReference type="InterPro" id="IPR038603">
    <property type="entry name" value="Znf_FCS_sf"/>
</dbReference>
<dbReference type="PANTHER" id="PTHR12247:SF64">
    <property type="entry name" value="LETHAL(3)MALIGNANT BRAIN TUMOR-LIKE PROTEIN 2"/>
    <property type="match status" value="1"/>
</dbReference>
<dbReference type="PANTHER" id="PTHR12247">
    <property type="entry name" value="POLYCOMB GROUP PROTEIN"/>
    <property type="match status" value="1"/>
</dbReference>
<dbReference type="Pfam" id="PF02820">
    <property type="entry name" value="MBT"/>
    <property type="match status" value="4"/>
</dbReference>
<dbReference type="Pfam" id="PF21319">
    <property type="entry name" value="zf-FCS_1"/>
    <property type="match status" value="1"/>
</dbReference>
<dbReference type="SMART" id="SM00561">
    <property type="entry name" value="MBT"/>
    <property type="match status" value="4"/>
</dbReference>
<dbReference type="SUPFAM" id="SSF63748">
    <property type="entry name" value="Tudor/PWWP/MBT"/>
    <property type="match status" value="4"/>
</dbReference>
<dbReference type="PROSITE" id="PS51079">
    <property type="entry name" value="MBT"/>
    <property type="match status" value="4"/>
</dbReference>
<dbReference type="PROSITE" id="PS51024">
    <property type="entry name" value="ZF_FCS"/>
    <property type="match status" value="1"/>
</dbReference>
<proteinExistence type="evidence at protein level"/>
<comment type="function">
    <text evidence="1">Putative Polycomb group (PcG) protein. PcG proteins maintain the transcriptionally repressive state of genes, probably via a modification of chromatin, rendering it heritably changed in its expressibility. Its association with a chromatin-remodeling complex suggests that it may contribute to prevent expression of genes that trigger the cell into mitosis. Binds to monomethylated and dimethylated 'Lys-20' on histone H4. Binds histone H3 peptides that are monomethylated or dimethylated on 'Lys-4', 'Lys-9' or 'Lys-27' (By similarity).</text>
</comment>
<comment type="subunit">
    <text evidence="1">Part of the E2F6.com-1 complex in G0 phase composed of E2F6, MGA, MAX, TFDP1, CBX3, BAT8, EUHMTASE1, RING1, RNF2, MBLR, BAT8 and YAF2.</text>
</comment>
<comment type="subcellular location">
    <subcellularLocation>
        <location evidence="5">Nucleus</location>
    </subcellularLocation>
</comment>
<evidence type="ECO:0000250" key="1"/>
<evidence type="ECO:0000250" key="2">
    <source>
        <dbReference type="UniProtKB" id="Q969R5"/>
    </source>
</evidence>
<evidence type="ECO:0000255" key="3">
    <source>
        <dbReference type="PROSITE-ProRule" id="PRU00367"/>
    </source>
</evidence>
<evidence type="ECO:0000256" key="4">
    <source>
        <dbReference type="SAM" id="MobiDB-lite"/>
    </source>
</evidence>
<evidence type="ECO:0000305" key="5"/>
<evidence type="ECO:0007744" key="6">
    <source>
    </source>
</evidence>
<protein>
    <recommendedName>
        <fullName>Lethal(3)malignant brain tumor-like protein 2</fullName>
        <shortName>L(3)mbt-like protein 2</shortName>
    </recommendedName>
</protein>
<accession>Q3MIF2</accession>
<sequence length="703" mass="78967">MEKPRGTEETPSSEPMEEEEDDDLELFGGYDSFRSYNSSAGSESSSYLEESSEAENEDREAGELPTSPLHLFSSANNRALDGSGSEPAVCEMCGIVGTREAFFSKTKRFCSVSCSRSYSSNSKKASILARLQGKPPTKKAKVLHKAAWSAKIGAFLHAQGTGQLADGTPTGQDALVLGFDWGKFLKDHSYKAAPVGCFKHVPLYDQWEDVMKGMKVEVLNSDAVLPSRVYWIATVIQAAGYRVLLRYEGFENDASHDFWCNLGTVDVHPIGWCAINSKILVPPRTIHAKFTDWKSYLMKRLVGSRTLPADFHIKMVESMKYPFRQGMRLEVVDKTQVSRTRMAVVDTVIGGRLRLLYEDGDSDDDFWCHMWSPLIHPVGWSRRVGHGIKMSERRCDMSHHPTFRKIYCDAVPYLFKKVRAVYTEGGWFEEGMKLEAIDPLNLGNICVATICKVLLDGYLMICVDGGPSTDGSDWFCYHASSHAIFPATFCQKNDIELTPPKGYETQPFDWESYLEKTKSKAAPARLFNMDCPNHGFKVGMKLEAVDLMEPRLICVATVKRVVHRLLSIHFDGWDNEYDQWVDCESPDIYPVGWCELTGYQLQPPVSAEPNTPQKGKDATKKKKKQFGKKRKRIPSAKTRPLRQSSKKPLLEDNLEALGVSEPVPDDIIAVCVKEEHQDLPSPDRSPSPLLPLPTESIKQERDS</sequence>